<proteinExistence type="inferred from homology"/>
<organism>
    <name type="scientific">Staphylococcus aureus (strain COL)</name>
    <dbReference type="NCBI Taxonomy" id="93062"/>
    <lineage>
        <taxon>Bacteria</taxon>
        <taxon>Bacillati</taxon>
        <taxon>Bacillota</taxon>
        <taxon>Bacilli</taxon>
        <taxon>Bacillales</taxon>
        <taxon>Staphylococcaceae</taxon>
        <taxon>Staphylococcus</taxon>
    </lineage>
</organism>
<evidence type="ECO:0000255" key="1">
    <source>
        <dbReference type="HAMAP-Rule" id="MF_00038"/>
    </source>
</evidence>
<evidence type="ECO:0000305" key="2"/>
<feature type="chain" id="PRO_0000108890" description="Phospho-N-acetylmuramoyl-pentapeptide-transferase">
    <location>
        <begin position="1"/>
        <end position="321"/>
    </location>
</feature>
<feature type="transmembrane region" description="Helical" evidence="1">
    <location>
        <begin position="1"/>
        <end position="21"/>
    </location>
</feature>
<feature type="transmembrane region" description="Helical" evidence="1">
    <location>
        <begin position="50"/>
        <end position="70"/>
    </location>
</feature>
<feature type="transmembrane region" description="Helical" evidence="1">
    <location>
        <begin position="76"/>
        <end position="96"/>
    </location>
</feature>
<feature type="transmembrane region" description="Helical" evidence="1">
    <location>
        <begin position="112"/>
        <end position="132"/>
    </location>
</feature>
<feature type="transmembrane region" description="Helical" evidence="1">
    <location>
        <begin position="140"/>
        <end position="160"/>
    </location>
</feature>
<feature type="transmembrane region" description="Helical" evidence="1">
    <location>
        <begin position="176"/>
        <end position="196"/>
    </location>
</feature>
<feature type="transmembrane region" description="Helical" evidence="1">
    <location>
        <begin position="200"/>
        <end position="220"/>
    </location>
</feature>
<feature type="transmembrane region" description="Helical" evidence="1">
    <location>
        <begin position="225"/>
        <end position="245"/>
    </location>
</feature>
<feature type="transmembrane region" description="Helical" evidence="1">
    <location>
        <begin position="250"/>
        <end position="270"/>
    </location>
</feature>
<feature type="transmembrane region" description="Helical" evidence="1">
    <location>
        <begin position="300"/>
        <end position="320"/>
    </location>
</feature>
<dbReference type="EC" id="2.7.8.13" evidence="1"/>
<dbReference type="EMBL" id="CP000046">
    <property type="protein sequence ID" value="AAW36574.1"/>
    <property type="molecule type" value="Genomic_DNA"/>
</dbReference>
<dbReference type="RefSeq" id="WP_000578458.1">
    <property type="nucleotide sequence ID" value="NZ_JBGOFO010000002.1"/>
</dbReference>
<dbReference type="SMR" id="Q5HGP9"/>
<dbReference type="KEGG" id="sac:SACOL1195"/>
<dbReference type="HOGENOM" id="CLU_023982_0_1_9"/>
<dbReference type="SABIO-RK" id="Q5HGP9"/>
<dbReference type="UniPathway" id="UPA00219"/>
<dbReference type="Proteomes" id="UP000000530">
    <property type="component" value="Chromosome"/>
</dbReference>
<dbReference type="GO" id="GO:0005886">
    <property type="term" value="C:plasma membrane"/>
    <property type="evidence" value="ECO:0007669"/>
    <property type="project" value="UniProtKB-SubCell"/>
</dbReference>
<dbReference type="GO" id="GO:0046872">
    <property type="term" value="F:metal ion binding"/>
    <property type="evidence" value="ECO:0007669"/>
    <property type="project" value="UniProtKB-KW"/>
</dbReference>
<dbReference type="GO" id="GO:0008963">
    <property type="term" value="F:phospho-N-acetylmuramoyl-pentapeptide-transferase activity"/>
    <property type="evidence" value="ECO:0007669"/>
    <property type="project" value="UniProtKB-UniRule"/>
</dbReference>
<dbReference type="GO" id="GO:0051301">
    <property type="term" value="P:cell division"/>
    <property type="evidence" value="ECO:0007669"/>
    <property type="project" value="UniProtKB-KW"/>
</dbReference>
<dbReference type="GO" id="GO:0071555">
    <property type="term" value="P:cell wall organization"/>
    <property type="evidence" value="ECO:0007669"/>
    <property type="project" value="UniProtKB-KW"/>
</dbReference>
<dbReference type="GO" id="GO:0009252">
    <property type="term" value="P:peptidoglycan biosynthetic process"/>
    <property type="evidence" value="ECO:0007669"/>
    <property type="project" value="UniProtKB-UniRule"/>
</dbReference>
<dbReference type="GO" id="GO:0008360">
    <property type="term" value="P:regulation of cell shape"/>
    <property type="evidence" value="ECO:0007669"/>
    <property type="project" value="UniProtKB-KW"/>
</dbReference>
<dbReference type="CDD" id="cd06852">
    <property type="entry name" value="GT_MraY"/>
    <property type="match status" value="1"/>
</dbReference>
<dbReference type="HAMAP" id="MF_00038">
    <property type="entry name" value="MraY"/>
    <property type="match status" value="1"/>
</dbReference>
<dbReference type="InterPro" id="IPR000715">
    <property type="entry name" value="Glycosyl_transferase_4"/>
</dbReference>
<dbReference type="InterPro" id="IPR003524">
    <property type="entry name" value="PNAcMuramoyl-5peptid_Trfase"/>
</dbReference>
<dbReference type="InterPro" id="IPR018480">
    <property type="entry name" value="PNAcMuramoyl-5peptid_Trfase_CS"/>
</dbReference>
<dbReference type="NCBIfam" id="TIGR00445">
    <property type="entry name" value="mraY"/>
    <property type="match status" value="1"/>
</dbReference>
<dbReference type="PANTHER" id="PTHR22926">
    <property type="entry name" value="PHOSPHO-N-ACETYLMURAMOYL-PENTAPEPTIDE-TRANSFERASE"/>
    <property type="match status" value="1"/>
</dbReference>
<dbReference type="PANTHER" id="PTHR22926:SF5">
    <property type="entry name" value="PHOSPHO-N-ACETYLMURAMOYL-PENTAPEPTIDE-TRANSFERASE HOMOLOG"/>
    <property type="match status" value="1"/>
</dbReference>
<dbReference type="Pfam" id="PF00953">
    <property type="entry name" value="Glycos_transf_4"/>
    <property type="match status" value="1"/>
</dbReference>
<dbReference type="PROSITE" id="PS01347">
    <property type="entry name" value="MRAY_1"/>
    <property type="match status" value="1"/>
</dbReference>
<dbReference type="PROSITE" id="PS01348">
    <property type="entry name" value="MRAY_2"/>
    <property type="match status" value="1"/>
</dbReference>
<reference key="1">
    <citation type="journal article" date="2005" name="J. Bacteriol.">
        <title>Insights on evolution of virulence and resistance from the complete genome analysis of an early methicillin-resistant Staphylococcus aureus strain and a biofilm-producing methicillin-resistant Staphylococcus epidermidis strain.</title>
        <authorList>
            <person name="Gill S.R."/>
            <person name="Fouts D.E."/>
            <person name="Archer G.L."/>
            <person name="Mongodin E.F."/>
            <person name="DeBoy R.T."/>
            <person name="Ravel J."/>
            <person name="Paulsen I.T."/>
            <person name="Kolonay J.F."/>
            <person name="Brinkac L.M."/>
            <person name="Beanan M.J."/>
            <person name="Dodson R.J."/>
            <person name="Daugherty S.C."/>
            <person name="Madupu R."/>
            <person name="Angiuoli S.V."/>
            <person name="Durkin A.S."/>
            <person name="Haft D.H."/>
            <person name="Vamathevan J.J."/>
            <person name="Khouri H."/>
            <person name="Utterback T.R."/>
            <person name="Lee C."/>
            <person name="Dimitrov G."/>
            <person name="Jiang L."/>
            <person name="Qin H."/>
            <person name="Weidman J."/>
            <person name="Tran K."/>
            <person name="Kang K.H."/>
            <person name="Hance I.R."/>
            <person name="Nelson K.E."/>
            <person name="Fraser C.M."/>
        </authorList>
    </citation>
    <scope>NUCLEOTIDE SEQUENCE [LARGE SCALE GENOMIC DNA]</scope>
    <source>
        <strain>COL</strain>
    </source>
</reference>
<sequence length="321" mass="35232">MIFVYALLALVITFVLVPVLIPTLKRMKFGQSIREEGPQSHMKKTGTPTMGGLTFLLSIVITSLVAIIFVDQANPIILLLFVTIGFGLIGFIDDYIIVVKKNNQGLTSKQKFLAQIGIAIIFFVLSNVFHLVNFSTSIHIPFTNVAIPLSFAYVIFIVFWQVGFSNAVNLTDGLDGLATGLSIIGFTMYAIMSFVLGETAIGIFCIIMLFALLGFLPYNINPAKVFMGDTGSLALGGIFATISIMLNQELSLIFIGLVFVIETLSVMLQVASFKLTGKRIFKMSPIHHHFELIGWSEWKVVTVFWAVGLISGLIGLWIGVH</sequence>
<name>MRAY_STAAC</name>
<comment type="function">
    <text evidence="1">Catalyzes the initial step of the lipid cycle reactions in the biosynthesis of the cell wall peptidoglycan: transfers peptidoglycan precursor phospho-MurNAc-pentapeptide from UDP-MurNAc-pentapeptide onto the lipid carrier undecaprenyl phosphate, yielding undecaprenyl-pyrophosphoryl-MurNAc-pentapeptide, known as lipid I.</text>
</comment>
<comment type="catalytic activity">
    <reaction evidence="1">
        <text>UDP-N-acetyl-alpha-D-muramoyl-L-alanyl-gamma-D-glutamyl-L-lysyl-D-alanyl-D-alanine + di-trans,octa-cis-undecaprenyl phosphate = Mur2Ac(oyl-L-Ala-gamma-D-Glu-L-Lys-D-Ala-D-Ala)-di-trans,octa-cis-undecaprenyl diphosphate + UMP</text>
        <dbReference type="Rhea" id="RHEA:21920"/>
        <dbReference type="ChEBI" id="CHEBI:57865"/>
        <dbReference type="ChEBI" id="CHEBI:60032"/>
        <dbReference type="ChEBI" id="CHEBI:60392"/>
        <dbReference type="ChEBI" id="CHEBI:70758"/>
        <dbReference type="EC" id="2.7.8.13"/>
    </reaction>
</comment>
<comment type="cofactor">
    <cofactor evidence="1">
        <name>Mg(2+)</name>
        <dbReference type="ChEBI" id="CHEBI:18420"/>
    </cofactor>
</comment>
<comment type="pathway">
    <text evidence="1">Cell wall biogenesis; peptidoglycan biosynthesis.</text>
</comment>
<comment type="subcellular location">
    <subcellularLocation>
        <location evidence="1">Cell membrane</location>
        <topology evidence="1">Multi-pass membrane protein</topology>
    </subcellularLocation>
</comment>
<comment type="similarity">
    <text evidence="1 2">Belongs to the glycosyltransferase 4 family. MraY subfamily.</text>
</comment>
<accession>Q5HGP9</accession>
<protein>
    <recommendedName>
        <fullName evidence="1">Phospho-N-acetylmuramoyl-pentapeptide-transferase</fullName>
        <ecNumber evidence="1">2.7.8.13</ecNumber>
    </recommendedName>
    <alternativeName>
        <fullName evidence="1">UDP-MurNAc-pentapeptide phosphotransferase</fullName>
    </alternativeName>
</protein>
<gene>
    <name evidence="1" type="primary">mraY</name>
    <name type="ordered locus">SACOL1195</name>
</gene>
<keyword id="KW-0131">Cell cycle</keyword>
<keyword id="KW-0132">Cell division</keyword>
<keyword id="KW-1003">Cell membrane</keyword>
<keyword id="KW-0133">Cell shape</keyword>
<keyword id="KW-0961">Cell wall biogenesis/degradation</keyword>
<keyword id="KW-0460">Magnesium</keyword>
<keyword id="KW-0472">Membrane</keyword>
<keyword id="KW-0479">Metal-binding</keyword>
<keyword id="KW-0573">Peptidoglycan synthesis</keyword>
<keyword id="KW-0808">Transferase</keyword>
<keyword id="KW-0812">Transmembrane</keyword>
<keyword id="KW-1133">Transmembrane helix</keyword>